<organism>
    <name type="scientific">Mycobacterium tuberculosis (strain CDC 1551 / Oshkosh)</name>
    <dbReference type="NCBI Taxonomy" id="83331"/>
    <lineage>
        <taxon>Bacteria</taxon>
        <taxon>Bacillati</taxon>
        <taxon>Actinomycetota</taxon>
        <taxon>Actinomycetes</taxon>
        <taxon>Mycobacteriales</taxon>
        <taxon>Mycobacteriaceae</taxon>
        <taxon>Mycobacterium</taxon>
        <taxon>Mycobacterium tuberculosis complex</taxon>
    </lineage>
</organism>
<evidence type="ECO:0000255" key="1">
    <source>
        <dbReference type="HAMAP-Rule" id="MF_00154"/>
    </source>
</evidence>
<sequence>MNVRGRVAPRRVTGRAMSTLLAYLALTKPRVIELLLVTAIPAMLLADRGAIHPLLMLNTLVGGMMAAAGANTLNCVADADIDKVMKRTARRPLAREAVPTRNALALGLTLTVISFFWLWCATNLLAGVLALVTVAFYVFVYTLWLKRRTSQNVVWGGAAGCMPVMIGWSAITGTIAWPALAMFAIIFFWTPPHTWALAMRYKQDYQVAGVPMLPAVATERQVTKQILIYTWLTVAATLVLALATSWLYGAVALVAGGWFLTMAHQLYAGVRAGEPVRPLRLFLQSNNYLAVVFCALAVDSVIALPTLH</sequence>
<feature type="chain" id="PRO_0000428490" description="Protoheme IX farnesyltransferase">
    <location>
        <begin position="1"/>
        <end position="308"/>
    </location>
</feature>
<feature type="transmembrane region" description="Helical" evidence="1">
    <location>
        <begin position="20"/>
        <end position="40"/>
    </location>
</feature>
<feature type="transmembrane region" description="Helical" evidence="1">
    <location>
        <begin position="50"/>
        <end position="70"/>
    </location>
</feature>
<feature type="transmembrane region" description="Helical" evidence="1">
    <location>
        <begin position="102"/>
        <end position="122"/>
    </location>
</feature>
<feature type="transmembrane region" description="Helical" evidence="1">
    <location>
        <begin position="124"/>
        <end position="144"/>
    </location>
</feature>
<feature type="transmembrane region" description="Helical" evidence="1">
    <location>
        <begin position="149"/>
        <end position="169"/>
    </location>
</feature>
<feature type="transmembrane region" description="Helical" evidence="1">
    <location>
        <begin position="170"/>
        <end position="190"/>
    </location>
</feature>
<feature type="transmembrane region" description="Helical" evidence="1">
    <location>
        <begin position="227"/>
        <end position="249"/>
    </location>
</feature>
<feature type="transmembrane region" description="Helical" evidence="1">
    <location>
        <begin position="288"/>
        <end position="308"/>
    </location>
</feature>
<keyword id="KW-1003">Cell membrane</keyword>
<keyword id="KW-0350">Heme biosynthesis</keyword>
<keyword id="KW-0472">Membrane</keyword>
<keyword id="KW-1185">Reference proteome</keyword>
<keyword id="KW-0808">Transferase</keyword>
<keyword id="KW-0812">Transmembrane</keyword>
<keyword id="KW-1133">Transmembrane helix</keyword>
<dbReference type="EC" id="2.5.1.141" evidence="1"/>
<dbReference type="EMBL" id="AE000516">
    <property type="protein sequence ID" value="AAK45762.1"/>
    <property type="molecule type" value="Genomic_DNA"/>
</dbReference>
<dbReference type="PIR" id="F70917">
    <property type="entry name" value="F70917"/>
</dbReference>
<dbReference type="RefSeq" id="WP_003898882.1">
    <property type="nucleotide sequence ID" value="NZ_KK341227.1"/>
</dbReference>
<dbReference type="SMR" id="P9WFR6"/>
<dbReference type="KEGG" id="mtc:MT1498"/>
<dbReference type="PATRIC" id="fig|83331.31.peg.1612"/>
<dbReference type="HOGENOM" id="CLU_029631_0_1_11"/>
<dbReference type="UniPathway" id="UPA00834">
    <property type="reaction ID" value="UER00712"/>
</dbReference>
<dbReference type="Proteomes" id="UP000001020">
    <property type="component" value="Chromosome"/>
</dbReference>
<dbReference type="GO" id="GO:0005886">
    <property type="term" value="C:plasma membrane"/>
    <property type="evidence" value="ECO:0007669"/>
    <property type="project" value="UniProtKB-SubCell"/>
</dbReference>
<dbReference type="GO" id="GO:0008495">
    <property type="term" value="F:protoheme IX farnesyltransferase activity"/>
    <property type="evidence" value="ECO:0007669"/>
    <property type="project" value="UniProtKB-UniRule"/>
</dbReference>
<dbReference type="GO" id="GO:0048034">
    <property type="term" value="P:heme O biosynthetic process"/>
    <property type="evidence" value="ECO:0007669"/>
    <property type="project" value="UniProtKB-UniRule"/>
</dbReference>
<dbReference type="CDD" id="cd13957">
    <property type="entry name" value="PT_UbiA_Cox10"/>
    <property type="match status" value="1"/>
</dbReference>
<dbReference type="FunFam" id="1.10.357.140:FF:000001">
    <property type="entry name" value="Protoheme IX farnesyltransferase"/>
    <property type="match status" value="1"/>
</dbReference>
<dbReference type="Gene3D" id="1.10.357.140">
    <property type="entry name" value="UbiA prenyltransferase"/>
    <property type="match status" value="1"/>
</dbReference>
<dbReference type="HAMAP" id="MF_00154">
    <property type="entry name" value="CyoE_CtaB"/>
    <property type="match status" value="1"/>
</dbReference>
<dbReference type="InterPro" id="IPR006369">
    <property type="entry name" value="Protohaem_IX_farnesylTrfase"/>
</dbReference>
<dbReference type="InterPro" id="IPR000537">
    <property type="entry name" value="UbiA_prenyltransferase"/>
</dbReference>
<dbReference type="InterPro" id="IPR044878">
    <property type="entry name" value="UbiA_sf"/>
</dbReference>
<dbReference type="NCBIfam" id="TIGR01473">
    <property type="entry name" value="cyoE_ctaB"/>
    <property type="match status" value="1"/>
</dbReference>
<dbReference type="NCBIfam" id="NF003349">
    <property type="entry name" value="PRK04375.1-2"/>
    <property type="match status" value="1"/>
</dbReference>
<dbReference type="PANTHER" id="PTHR43448:SF7">
    <property type="entry name" value="4-HYDROXYBENZOATE SOLANESYLTRANSFERASE"/>
    <property type="match status" value="1"/>
</dbReference>
<dbReference type="PANTHER" id="PTHR43448">
    <property type="entry name" value="PROTOHEME IX FARNESYLTRANSFERASE, MITOCHONDRIAL"/>
    <property type="match status" value="1"/>
</dbReference>
<dbReference type="Pfam" id="PF01040">
    <property type="entry name" value="UbiA"/>
    <property type="match status" value="1"/>
</dbReference>
<protein>
    <recommendedName>
        <fullName evidence="1">Protoheme IX farnesyltransferase</fullName>
        <ecNumber evidence="1">2.5.1.141</ecNumber>
    </recommendedName>
    <alternativeName>
        <fullName evidence="1">Heme B farnesyltransferase</fullName>
    </alternativeName>
    <alternativeName>
        <fullName evidence="1">Heme O synthase</fullName>
    </alternativeName>
</protein>
<accession>P9WFR6</accession>
<accession>L0T8A9</accession>
<accession>O06809</accession>
<accession>Q7D8F6</accession>
<gene>
    <name evidence="1" type="primary">ctaB</name>
    <name type="ordered locus">MT1498</name>
</gene>
<comment type="function">
    <text evidence="1">Converts heme B (protoheme IX) to heme O by substitution of the vinyl group on carbon 2 of heme B porphyrin ring with a hydroxyethyl farnesyl side group.</text>
</comment>
<comment type="catalytic activity">
    <reaction evidence="1">
        <text>heme b + (2E,6E)-farnesyl diphosphate + H2O = Fe(II)-heme o + diphosphate</text>
        <dbReference type="Rhea" id="RHEA:28070"/>
        <dbReference type="ChEBI" id="CHEBI:15377"/>
        <dbReference type="ChEBI" id="CHEBI:33019"/>
        <dbReference type="ChEBI" id="CHEBI:60344"/>
        <dbReference type="ChEBI" id="CHEBI:60530"/>
        <dbReference type="ChEBI" id="CHEBI:175763"/>
        <dbReference type="EC" id="2.5.1.141"/>
    </reaction>
</comment>
<comment type="pathway">
    <text evidence="1">Porphyrin-containing compound metabolism; heme O biosynthesis; heme O from protoheme: step 1/1.</text>
</comment>
<comment type="subcellular location">
    <subcellularLocation>
        <location evidence="1">Cell membrane</location>
        <topology evidence="1">Multi-pass membrane protein</topology>
    </subcellularLocation>
</comment>
<comment type="miscellaneous">
    <text evidence="1">Carbon 2 of the heme B porphyrin ring is defined according to the Fischer nomenclature.</text>
</comment>
<comment type="similarity">
    <text evidence="1">Belongs to the UbiA prenyltransferase family. Protoheme IX farnesyltransferase subfamily.</text>
</comment>
<name>COXX_MYCTO</name>
<reference key="1">
    <citation type="journal article" date="2002" name="J. Bacteriol.">
        <title>Whole-genome comparison of Mycobacterium tuberculosis clinical and laboratory strains.</title>
        <authorList>
            <person name="Fleischmann R.D."/>
            <person name="Alland D."/>
            <person name="Eisen J.A."/>
            <person name="Carpenter L."/>
            <person name="White O."/>
            <person name="Peterson J.D."/>
            <person name="DeBoy R.T."/>
            <person name="Dodson R.J."/>
            <person name="Gwinn M.L."/>
            <person name="Haft D.H."/>
            <person name="Hickey E.K."/>
            <person name="Kolonay J.F."/>
            <person name="Nelson W.C."/>
            <person name="Umayam L.A."/>
            <person name="Ermolaeva M.D."/>
            <person name="Salzberg S.L."/>
            <person name="Delcher A."/>
            <person name="Utterback T.R."/>
            <person name="Weidman J.F."/>
            <person name="Khouri H.M."/>
            <person name="Gill J."/>
            <person name="Mikula A."/>
            <person name="Bishai W."/>
            <person name="Jacobs W.R. Jr."/>
            <person name="Venter J.C."/>
            <person name="Fraser C.M."/>
        </authorList>
    </citation>
    <scope>NUCLEOTIDE SEQUENCE [LARGE SCALE GENOMIC DNA]</scope>
    <source>
        <strain>CDC 1551 / Oshkosh</strain>
    </source>
</reference>
<proteinExistence type="inferred from homology"/>